<comment type="function">
    <text evidence="2">Catalyzes the hydrolysis of p-nitrophenyl-alpha-L-arabinofuranoside (pNP-alphaL-Af) and the hydrolysis of the terminal alpha-L-arabinofuranoside at the C20 position of ginsenoside Rc to produce ginsenoside Rd (PubMed:21851513). Cannot hydrolyze p-nitrophenyl-alpha-L-arabinopyranoside (pNP-alphaL-Ap) and ginsenoside Rb2 (PubMed:21851513).</text>
</comment>
<comment type="catalytic activity">
    <reaction evidence="2">
        <text>Hydrolysis of terminal non-reducing alpha-L-arabinofuranoside residues in alpha-L-arabinosides.</text>
        <dbReference type="EC" id="3.2.1.55"/>
    </reaction>
</comment>
<comment type="catalytic activity">
    <reaction evidence="2">
        <text>(20S)-ginsenoside Rc + H2O = L-arabinofuranose + (20S)-ginsenoside Rd</text>
        <dbReference type="Rhea" id="RHEA:79315"/>
        <dbReference type="ChEBI" id="CHEBI:6178"/>
        <dbReference type="ChEBI" id="CHEBI:15377"/>
        <dbReference type="ChEBI" id="CHEBI:67988"/>
        <dbReference type="ChEBI" id="CHEBI:77154"/>
    </reaction>
    <physiologicalReaction direction="left-to-right" evidence="2">
        <dbReference type="Rhea" id="RHEA:79316"/>
    </physiologicalReaction>
</comment>
<comment type="activity regulation">
    <text evidence="2">Completely inhibited by Cu(2+) and partially inhibited by Co(2+) and Ba(2+).</text>
</comment>
<comment type="biophysicochemical properties">
    <kinetics>
        <KM evidence="2">0.21 mM for p-nitrophenyl-alpha-L-arabinofuranoside (pNP-alphaL-Af)</KM>
        <KM evidence="2">1.73 mM for ginsenoside Rc</KM>
        <Vmax evidence="2">32.19 umol/min/mg enzyme with ginsenoside Rc as substrate</Vmax>
        <Vmax evidence="2">71.11 umol/min/mg enzyme with pNP-alphaL-Af as substrate</Vmax>
    </kinetics>
    <phDependence>
        <text evidence="2">Optimum pH is 4.7.</text>
    </phDependence>
    <temperatureDependence>
        <text evidence="2">Optimum temperature is 57 degrees Celsius.</text>
    </temperatureDependence>
</comment>
<comment type="subunit">
    <text evidence="1">Homohexamer; trimer of dimers.</text>
</comment>
<comment type="similarity">
    <text evidence="4">Belongs to the glycosyl hydrolase 51 family.</text>
</comment>
<proteinExistence type="evidence at protein level"/>
<evidence type="ECO:0000250" key="1">
    <source>
        <dbReference type="UniProtKB" id="Q9XBQ3"/>
    </source>
</evidence>
<evidence type="ECO:0000269" key="2">
    <source>
    </source>
</evidence>
<evidence type="ECO:0000303" key="3">
    <source>
    </source>
</evidence>
<evidence type="ECO:0000305" key="4"/>
<organism>
    <name type="scientific">Bifidobacterium longum</name>
    <dbReference type="NCBI Taxonomy" id="216816"/>
    <lineage>
        <taxon>Bacteria</taxon>
        <taxon>Bacillati</taxon>
        <taxon>Actinomycetota</taxon>
        <taxon>Actinomycetes</taxon>
        <taxon>Bifidobacteriales</taxon>
        <taxon>Bifidobacteriaceae</taxon>
        <taxon>Bifidobacterium</taxon>
    </lineage>
</organism>
<name>16ABF_BIFLN</name>
<keyword id="KW-0119">Carbohydrate metabolism</keyword>
<keyword id="KW-0326">Glycosidase</keyword>
<keyword id="KW-0378">Hydrolase</keyword>
<protein>
    <recommendedName>
        <fullName>Exo-alpha-(1-&gt;6)-L-arabinofuranosidase</fullName>
        <shortName>ABF</shortName>
        <ecNumber evidence="2">3.2.1.55</ecNumber>
    </recommendedName>
</protein>
<accession>E7CY70</accession>
<dbReference type="EC" id="3.2.1.55" evidence="2"/>
<dbReference type="EMBL" id="HM803113">
    <property type="protein sequence ID" value="ADT80795.1"/>
    <property type="molecule type" value="Genomic_DNA"/>
</dbReference>
<dbReference type="SMR" id="E7CY70"/>
<dbReference type="CAZy" id="GH51">
    <property type="family name" value="Glycoside Hydrolase Family 51"/>
</dbReference>
<dbReference type="eggNOG" id="COG3534">
    <property type="taxonomic scope" value="Bacteria"/>
</dbReference>
<dbReference type="OMA" id="GETSPKW"/>
<dbReference type="BRENDA" id="3.2.1.55">
    <property type="organism ID" value="851"/>
</dbReference>
<dbReference type="GO" id="GO:0046556">
    <property type="term" value="F:alpha-L-arabinofuranosidase activity"/>
    <property type="evidence" value="ECO:0007669"/>
    <property type="project" value="InterPro"/>
</dbReference>
<dbReference type="GO" id="GO:0046373">
    <property type="term" value="P:L-arabinose metabolic process"/>
    <property type="evidence" value="ECO:0007669"/>
    <property type="project" value="InterPro"/>
</dbReference>
<dbReference type="GO" id="GO:0000272">
    <property type="term" value="P:polysaccharide catabolic process"/>
    <property type="evidence" value="ECO:0007669"/>
    <property type="project" value="TreeGrafter"/>
</dbReference>
<dbReference type="Gene3D" id="3.20.20.80">
    <property type="entry name" value="Glycosidases"/>
    <property type="match status" value="1"/>
</dbReference>
<dbReference type="Gene3D" id="2.60.40.1180">
    <property type="entry name" value="Golgi alpha-mannosidase II"/>
    <property type="match status" value="1"/>
</dbReference>
<dbReference type="InterPro" id="IPR010720">
    <property type="entry name" value="Alpha-L-AF_C"/>
</dbReference>
<dbReference type="InterPro" id="IPR013780">
    <property type="entry name" value="Glyco_hydro_b"/>
</dbReference>
<dbReference type="InterPro" id="IPR017853">
    <property type="entry name" value="Glycoside_hydrolase_SF"/>
</dbReference>
<dbReference type="PANTHER" id="PTHR43576:SF3">
    <property type="entry name" value="ALPHA-L-ARABINOFURANOSIDASE C"/>
    <property type="match status" value="1"/>
</dbReference>
<dbReference type="PANTHER" id="PTHR43576">
    <property type="entry name" value="ALPHA-L-ARABINOFURANOSIDASE C-RELATED"/>
    <property type="match status" value="1"/>
</dbReference>
<dbReference type="Pfam" id="PF06964">
    <property type="entry name" value="Alpha-L-AF_C"/>
    <property type="match status" value="1"/>
</dbReference>
<dbReference type="SMART" id="SM00813">
    <property type="entry name" value="Alpha-L-AF_C"/>
    <property type="match status" value="1"/>
</dbReference>
<dbReference type="SUPFAM" id="SSF51445">
    <property type="entry name" value="(Trans)glycosidases"/>
    <property type="match status" value="1"/>
</dbReference>
<dbReference type="SUPFAM" id="SSF51011">
    <property type="entry name" value="Glycosyl hydrolase domain"/>
    <property type="match status" value="1"/>
</dbReference>
<feature type="chain" id="PRO_0000422140" description="Exo-alpha-(1-&gt;6)-L-arabinofuranosidase">
    <location>
        <begin position="1"/>
        <end position="522"/>
    </location>
</feature>
<feature type="active site" description="Proton donor/acceptor" evidence="1">
    <location>
        <position position="186"/>
    </location>
</feature>
<feature type="active site" description="Nucleophile" evidence="1">
    <location>
        <position position="310"/>
    </location>
</feature>
<feature type="binding site" evidence="1">
    <location>
        <position position="39"/>
    </location>
    <ligand>
        <name>alpha-L-arabinofuranose</name>
        <dbReference type="ChEBI" id="CHEBI:28772"/>
    </ligand>
</feature>
<feature type="binding site" evidence="1">
    <location>
        <position position="84"/>
    </location>
    <ligand>
        <name>alpha-L-arabinofuranose</name>
        <dbReference type="ChEBI" id="CHEBI:28772"/>
    </ligand>
</feature>
<feature type="binding site" evidence="1">
    <location>
        <position position="185"/>
    </location>
    <ligand>
        <name>alpha-L-arabinofuranose</name>
        <dbReference type="ChEBI" id="CHEBI:28772"/>
    </ligand>
</feature>
<feature type="binding site" evidence="1">
    <location>
        <position position="257"/>
    </location>
    <ligand>
        <name>alpha-L-arabinofuranose</name>
        <dbReference type="ChEBI" id="CHEBI:28772"/>
    </ligand>
</feature>
<feature type="binding site" description="covalent" evidence="1">
    <location>
        <position position="310"/>
    </location>
    <ligand>
        <name>alpha-L-arabinofuranose</name>
        <dbReference type="ChEBI" id="CHEBI:28772"/>
    </ligand>
</feature>
<feature type="binding site" evidence="1">
    <location>
        <position position="370"/>
    </location>
    <ligand>
        <name>alpha-L-arabinofuranose</name>
        <dbReference type="ChEBI" id="CHEBI:28772"/>
    </ligand>
</feature>
<feature type="site" description="Important for substrate recognition" evidence="1">
    <location>
        <position position="314"/>
    </location>
</feature>
<feature type="site" description="Important for substrate recognition" evidence="1">
    <location>
        <position position="370"/>
    </location>
</feature>
<gene>
    <name evidence="3" type="primary">afuB</name>
</gene>
<reference key="1">
    <citation type="journal article" date="2011" name="J. Appl. Microbiol.">
        <title>Cloning and characterization of alpha-L-arabinofuranosidase and bifunctional alpha-L-arabinopyranosidase/beta-D-galactopyranosidase from Bifidobacterium longum H-1.</title>
        <authorList>
            <person name="Lee J.H."/>
            <person name="Hyun Y.J."/>
            <person name="Kim D.H."/>
        </authorList>
    </citation>
    <scope>NUCLEOTIDE SEQUENCE [GENOMIC DNA]</scope>
    <scope>FUNCTION</scope>
    <scope>CATALYTIC ACTIVITY</scope>
    <scope>ACTIVITY REGULATION</scope>
    <scope>BIOPHYSICOCHEMICAL PROPERTIES</scope>
    <scope>NOMENCLATURE</scope>
    <source>
        <strain>H-1</strain>
    </source>
</reference>
<sequence>MSEHSHDNKPGELEESRLVVDNDFEVAPVNDRLFGSFVEHLGRCVYDGIYEPGHPEADEDGFRKDVIELVKELGATTIRYPGGNFVSGYRWEDGVGPRDERPRRLDLAWHSTETNQFGLHEMAKWLEKTGGNELMEAVNLGTRGLEEALDLLEYANIPGGTKLSEERRANGADQPFGIKMWCLGNEMDGPWQTGHKSAEDYGTLAASVAAGMRAIDPNVELVVCGSSSHVMDTFGKWEETVLEKTFDNVNFVSCHAYYHPELQPDGTRDMKSFLASGVDMDGFINDVAAAIDATKARLKSKHDVFISFDEWNVWYLNEEPSKNPEGIGNWPVAPRLLEDVYSAADAVVFGDLMITLLKNADRVHAASLAQLVNVIAPIMTEPGGPAWRQTTFYPFSLTAKLAKGGTVLEPKLASGTYETDKYGEVPTINSVAVRGEDGTISVFVVNRSMEAANDFAIKLPEGFALSAVEAQTLHEDDLLAKNTLEDQNRVVLHPNTTITSDADTGTVRVTLPPVSWTAVHVK</sequence>